<keyword id="KW-0227">DNA damage</keyword>
<keyword id="KW-0234">DNA repair</keyword>
<keyword id="KW-0238">DNA-binding</keyword>
<keyword id="KW-0326">Glycosidase</keyword>
<keyword id="KW-0378">Hydrolase</keyword>
<keyword id="KW-0456">Lyase</keyword>
<keyword id="KW-0479">Metal-binding</keyword>
<keyword id="KW-0511">Multifunctional enzyme</keyword>
<keyword id="KW-0862">Zinc</keyword>
<keyword id="KW-0863">Zinc-finger</keyword>
<evidence type="ECO:0000250" key="1"/>
<evidence type="ECO:0000255" key="2">
    <source>
        <dbReference type="HAMAP-Rule" id="MF_00103"/>
    </source>
</evidence>
<accession>B4SXD7</accession>
<sequence length="269" mass="30137">MPELPEVETSRRGIEPHLVGATILHAHIRNGRLRWPVSDEIYRLSDTPVLSVQRRAKYLLLELPDGWIIIHLGMSGSLRILSEALPAEKHDHVDLVMSNGKILRYTDPRRFGAWLWTKELEGHNVLAHLGPEPLSDEFNGEYLQQKCAKKKTAIKPWLMDNKLVVGVGNIYASESLFAAGIHPDRLASSLSTAECDLLAQVIKAVLLRSIEQGGTTLKDFLQSDGKPGYFAQELQVYGRKGEPCRVCGTPIVATKHAQRATFYCRHCQK</sequence>
<name>FPG_SALNS</name>
<protein>
    <recommendedName>
        <fullName evidence="2">Formamidopyrimidine-DNA glycosylase</fullName>
        <shortName evidence="2">Fapy-DNA glycosylase</shortName>
        <ecNumber evidence="2">3.2.2.23</ecNumber>
    </recommendedName>
    <alternativeName>
        <fullName evidence="2">DNA-(apurinic or apyrimidinic site) lyase MutM</fullName>
        <shortName evidence="2">AP lyase MutM</shortName>
        <ecNumber evidence="2">4.2.99.18</ecNumber>
    </alternativeName>
</protein>
<gene>
    <name evidence="2" type="primary">mutM</name>
    <name evidence="2" type="synonym">fpg</name>
    <name type="ordered locus">SNSL254_A4006</name>
</gene>
<reference key="1">
    <citation type="journal article" date="2011" name="J. Bacteriol.">
        <title>Comparative genomics of 28 Salmonella enterica isolates: evidence for CRISPR-mediated adaptive sublineage evolution.</title>
        <authorList>
            <person name="Fricke W.F."/>
            <person name="Mammel M.K."/>
            <person name="McDermott P.F."/>
            <person name="Tartera C."/>
            <person name="White D.G."/>
            <person name="Leclerc J.E."/>
            <person name="Ravel J."/>
            <person name="Cebula T.A."/>
        </authorList>
    </citation>
    <scope>NUCLEOTIDE SEQUENCE [LARGE SCALE GENOMIC DNA]</scope>
    <source>
        <strain>SL254</strain>
    </source>
</reference>
<comment type="function">
    <text evidence="2">Involved in base excision repair of DNA damaged by oxidation or by mutagenic agents. Acts as a DNA glycosylase that recognizes and removes damaged bases. Has a preference for oxidized purines, such as 7,8-dihydro-8-oxoguanine (8-oxoG). Has AP (apurinic/apyrimidinic) lyase activity and introduces nicks in the DNA strand. Cleaves the DNA backbone by beta-delta elimination to generate a single-strand break at the site of the removed base with both 3'- and 5'-phosphates.</text>
</comment>
<comment type="catalytic activity">
    <reaction evidence="2">
        <text>Hydrolysis of DNA containing ring-opened 7-methylguanine residues, releasing 2,6-diamino-4-hydroxy-5-(N-methyl)formamidopyrimidine.</text>
        <dbReference type="EC" id="3.2.2.23"/>
    </reaction>
</comment>
<comment type="catalytic activity">
    <reaction evidence="2">
        <text>2'-deoxyribonucleotide-(2'-deoxyribose 5'-phosphate)-2'-deoxyribonucleotide-DNA = a 3'-end 2'-deoxyribonucleotide-(2,3-dehydro-2,3-deoxyribose 5'-phosphate)-DNA + a 5'-end 5'-phospho-2'-deoxyribonucleoside-DNA + H(+)</text>
        <dbReference type="Rhea" id="RHEA:66592"/>
        <dbReference type="Rhea" id="RHEA-COMP:13180"/>
        <dbReference type="Rhea" id="RHEA-COMP:16897"/>
        <dbReference type="Rhea" id="RHEA-COMP:17067"/>
        <dbReference type="ChEBI" id="CHEBI:15378"/>
        <dbReference type="ChEBI" id="CHEBI:136412"/>
        <dbReference type="ChEBI" id="CHEBI:157695"/>
        <dbReference type="ChEBI" id="CHEBI:167181"/>
        <dbReference type="EC" id="4.2.99.18"/>
    </reaction>
</comment>
<comment type="cofactor">
    <cofactor evidence="2">
        <name>Zn(2+)</name>
        <dbReference type="ChEBI" id="CHEBI:29105"/>
    </cofactor>
    <text evidence="2">Binds 1 zinc ion per subunit.</text>
</comment>
<comment type="subunit">
    <text evidence="2">Monomer.</text>
</comment>
<comment type="similarity">
    <text evidence="2">Belongs to the FPG family.</text>
</comment>
<feature type="initiator methionine" description="Removed" evidence="1">
    <location>
        <position position="1"/>
    </location>
</feature>
<feature type="chain" id="PRO_1000094075" description="Formamidopyrimidine-DNA glycosylase">
    <location>
        <begin position="2"/>
        <end position="269"/>
    </location>
</feature>
<feature type="zinc finger region" description="FPG-type" evidence="2">
    <location>
        <begin position="235"/>
        <end position="269"/>
    </location>
</feature>
<feature type="active site" description="Schiff-base intermediate with DNA" evidence="2">
    <location>
        <position position="2"/>
    </location>
</feature>
<feature type="active site" description="Proton donor" evidence="2">
    <location>
        <position position="3"/>
    </location>
</feature>
<feature type="active site" description="Proton donor; for beta-elimination activity" evidence="2">
    <location>
        <position position="57"/>
    </location>
</feature>
<feature type="active site" description="Proton donor; for delta-elimination activity" evidence="2">
    <location>
        <position position="259"/>
    </location>
</feature>
<feature type="binding site" evidence="2">
    <location>
        <position position="90"/>
    </location>
    <ligand>
        <name>DNA</name>
        <dbReference type="ChEBI" id="CHEBI:16991"/>
    </ligand>
</feature>
<feature type="binding site" evidence="2">
    <location>
        <position position="109"/>
    </location>
    <ligand>
        <name>DNA</name>
        <dbReference type="ChEBI" id="CHEBI:16991"/>
    </ligand>
</feature>
<feature type="binding site" evidence="2">
    <location>
        <position position="150"/>
    </location>
    <ligand>
        <name>DNA</name>
        <dbReference type="ChEBI" id="CHEBI:16991"/>
    </ligand>
</feature>
<dbReference type="EC" id="3.2.2.23" evidence="2"/>
<dbReference type="EC" id="4.2.99.18" evidence="2"/>
<dbReference type="EMBL" id="CP001113">
    <property type="protein sequence ID" value="ACF64742.1"/>
    <property type="molecule type" value="Genomic_DNA"/>
</dbReference>
<dbReference type="RefSeq" id="WP_001114512.1">
    <property type="nucleotide sequence ID" value="NZ_CCMR01000004.1"/>
</dbReference>
<dbReference type="SMR" id="B4SXD7"/>
<dbReference type="KEGG" id="see:SNSL254_A4006"/>
<dbReference type="HOGENOM" id="CLU_038423_1_1_6"/>
<dbReference type="Proteomes" id="UP000008824">
    <property type="component" value="Chromosome"/>
</dbReference>
<dbReference type="GO" id="GO:0034039">
    <property type="term" value="F:8-oxo-7,8-dihydroguanine DNA N-glycosylase activity"/>
    <property type="evidence" value="ECO:0007669"/>
    <property type="project" value="TreeGrafter"/>
</dbReference>
<dbReference type="GO" id="GO:0140078">
    <property type="term" value="F:class I DNA-(apurinic or apyrimidinic site) endonuclease activity"/>
    <property type="evidence" value="ECO:0007669"/>
    <property type="project" value="UniProtKB-EC"/>
</dbReference>
<dbReference type="GO" id="GO:0003684">
    <property type="term" value="F:damaged DNA binding"/>
    <property type="evidence" value="ECO:0007669"/>
    <property type="project" value="InterPro"/>
</dbReference>
<dbReference type="GO" id="GO:0008270">
    <property type="term" value="F:zinc ion binding"/>
    <property type="evidence" value="ECO:0007669"/>
    <property type="project" value="UniProtKB-UniRule"/>
</dbReference>
<dbReference type="GO" id="GO:0006284">
    <property type="term" value="P:base-excision repair"/>
    <property type="evidence" value="ECO:0007669"/>
    <property type="project" value="InterPro"/>
</dbReference>
<dbReference type="CDD" id="cd08966">
    <property type="entry name" value="EcFpg-like_N"/>
    <property type="match status" value="1"/>
</dbReference>
<dbReference type="FunFam" id="1.10.8.50:FF:000003">
    <property type="entry name" value="Formamidopyrimidine-DNA glycosylase"/>
    <property type="match status" value="1"/>
</dbReference>
<dbReference type="FunFam" id="3.20.190.10:FF:000001">
    <property type="entry name" value="Formamidopyrimidine-DNA glycosylase"/>
    <property type="match status" value="1"/>
</dbReference>
<dbReference type="Gene3D" id="1.10.8.50">
    <property type="match status" value="1"/>
</dbReference>
<dbReference type="Gene3D" id="3.20.190.10">
    <property type="entry name" value="MutM-like, N-terminal"/>
    <property type="match status" value="1"/>
</dbReference>
<dbReference type="HAMAP" id="MF_00103">
    <property type="entry name" value="Fapy_DNA_glycosyl"/>
    <property type="match status" value="1"/>
</dbReference>
<dbReference type="InterPro" id="IPR015886">
    <property type="entry name" value="DNA_glyclase/AP_lyase_DNA-bd"/>
</dbReference>
<dbReference type="InterPro" id="IPR015887">
    <property type="entry name" value="DNA_glyclase_Znf_dom_DNA_BS"/>
</dbReference>
<dbReference type="InterPro" id="IPR020629">
    <property type="entry name" value="Formamido-pyr_DNA_Glyclase"/>
</dbReference>
<dbReference type="InterPro" id="IPR012319">
    <property type="entry name" value="FPG_cat"/>
</dbReference>
<dbReference type="InterPro" id="IPR035937">
    <property type="entry name" value="MutM-like_N-ter"/>
</dbReference>
<dbReference type="InterPro" id="IPR010979">
    <property type="entry name" value="Ribosomal_uS13-like_H2TH"/>
</dbReference>
<dbReference type="InterPro" id="IPR000214">
    <property type="entry name" value="Znf_DNA_glyclase/AP_lyase"/>
</dbReference>
<dbReference type="InterPro" id="IPR010663">
    <property type="entry name" value="Znf_FPG/IleRS"/>
</dbReference>
<dbReference type="NCBIfam" id="TIGR00577">
    <property type="entry name" value="fpg"/>
    <property type="match status" value="1"/>
</dbReference>
<dbReference type="NCBIfam" id="NF002211">
    <property type="entry name" value="PRK01103.1"/>
    <property type="match status" value="1"/>
</dbReference>
<dbReference type="PANTHER" id="PTHR22993">
    <property type="entry name" value="FORMAMIDOPYRIMIDINE-DNA GLYCOSYLASE"/>
    <property type="match status" value="1"/>
</dbReference>
<dbReference type="PANTHER" id="PTHR22993:SF9">
    <property type="entry name" value="FORMAMIDOPYRIMIDINE-DNA GLYCOSYLASE"/>
    <property type="match status" value="1"/>
</dbReference>
<dbReference type="Pfam" id="PF01149">
    <property type="entry name" value="Fapy_DNA_glyco"/>
    <property type="match status" value="1"/>
</dbReference>
<dbReference type="Pfam" id="PF06831">
    <property type="entry name" value="H2TH"/>
    <property type="match status" value="1"/>
</dbReference>
<dbReference type="Pfam" id="PF06827">
    <property type="entry name" value="zf-FPG_IleRS"/>
    <property type="match status" value="1"/>
</dbReference>
<dbReference type="SMART" id="SM00898">
    <property type="entry name" value="Fapy_DNA_glyco"/>
    <property type="match status" value="1"/>
</dbReference>
<dbReference type="SMART" id="SM01232">
    <property type="entry name" value="H2TH"/>
    <property type="match status" value="1"/>
</dbReference>
<dbReference type="SUPFAM" id="SSF57716">
    <property type="entry name" value="Glucocorticoid receptor-like (DNA-binding domain)"/>
    <property type="match status" value="1"/>
</dbReference>
<dbReference type="SUPFAM" id="SSF81624">
    <property type="entry name" value="N-terminal domain of MutM-like DNA repair proteins"/>
    <property type="match status" value="1"/>
</dbReference>
<dbReference type="SUPFAM" id="SSF46946">
    <property type="entry name" value="S13-like H2TH domain"/>
    <property type="match status" value="1"/>
</dbReference>
<dbReference type="PROSITE" id="PS51068">
    <property type="entry name" value="FPG_CAT"/>
    <property type="match status" value="1"/>
</dbReference>
<dbReference type="PROSITE" id="PS01242">
    <property type="entry name" value="ZF_FPG_1"/>
    <property type="match status" value="1"/>
</dbReference>
<dbReference type="PROSITE" id="PS51066">
    <property type="entry name" value="ZF_FPG_2"/>
    <property type="match status" value="1"/>
</dbReference>
<organism>
    <name type="scientific">Salmonella newport (strain SL254)</name>
    <dbReference type="NCBI Taxonomy" id="423368"/>
    <lineage>
        <taxon>Bacteria</taxon>
        <taxon>Pseudomonadati</taxon>
        <taxon>Pseudomonadota</taxon>
        <taxon>Gammaproteobacteria</taxon>
        <taxon>Enterobacterales</taxon>
        <taxon>Enterobacteriaceae</taxon>
        <taxon>Salmonella</taxon>
    </lineage>
</organism>
<proteinExistence type="inferred from homology"/>